<keyword id="KW-0030">Aminoacyl-tRNA synthetase</keyword>
<keyword id="KW-0067">ATP-binding</keyword>
<keyword id="KW-0963">Cytoplasm</keyword>
<keyword id="KW-0436">Ligase</keyword>
<keyword id="KW-0547">Nucleotide-binding</keyword>
<keyword id="KW-0648">Protein biosynthesis</keyword>
<keyword id="KW-1185">Reference proteome</keyword>
<proteinExistence type="inferred from homology"/>
<feature type="chain" id="PRO_0000119552" description="Glutamate--tRNA ligase">
    <location>
        <begin position="1"/>
        <end position="483"/>
    </location>
</feature>
<feature type="short sequence motif" description="'HIGH' region" evidence="1">
    <location>
        <begin position="14"/>
        <end position="24"/>
    </location>
</feature>
<feature type="short sequence motif" description="'KMSKS' region" evidence="1">
    <location>
        <begin position="253"/>
        <end position="257"/>
    </location>
</feature>
<feature type="binding site" evidence="1">
    <location>
        <position position="256"/>
    </location>
    <ligand>
        <name>ATP</name>
        <dbReference type="ChEBI" id="CHEBI:30616"/>
    </ligand>
</feature>
<organism>
    <name type="scientific">Deinococcus radiodurans (strain ATCC 13939 / DSM 20539 / JCM 16871 / CCUG 27074 / LMG 4051 / NBRC 15346 / NCIMB 9279 / VKM B-1422 / R1)</name>
    <dbReference type="NCBI Taxonomy" id="243230"/>
    <lineage>
        <taxon>Bacteria</taxon>
        <taxon>Thermotogati</taxon>
        <taxon>Deinococcota</taxon>
        <taxon>Deinococci</taxon>
        <taxon>Deinococcales</taxon>
        <taxon>Deinococcaceae</taxon>
        <taxon>Deinococcus</taxon>
    </lineage>
</organism>
<protein>
    <recommendedName>
        <fullName evidence="1">Glutamate--tRNA ligase</fullName>
        <ecNumber evidence="1">6.1.1.17</ecNumber>
    </recommendedName>
    <alternativeName>
        <fullName evidence="1">Glutamyl-tRNA synthetase</fullName>
        <shortName evidence="1">GluRS</shortName>
    </alternativeName>
</protein>
<comment type="function">
    <text evidence="1">Catalyzes the attachment of glutamate to tRNA(Glu) in a two-step reaction: glutamate is first activated by ATP to form Glu-AMP and then transferred to the acceptor end of tRNA(Glu).</text>
</comment>
<comment type="catalytic activity">
    <reaction evidence="1">
        <text>tRNA(Glu) + L-glutamate + ATP = L-glutamyl-tRNA(Glu) + AMP + diphosphate</text>
        <dbReference type="Rhea" id="RHEA:23540"/>
        <dbReference type="Rhea" id="RHEA-COMP:9663"/>
        <dbReference type="Rhea" id="RHEA-COMP:9680"/>
        <dbReference type="ChEBI" id="CHEBI:29985"/>
        <dbReference type="ChEBI" id="CHEBI:30616"/>
        <dbReference type="ChEBI" id="CHEBI:33019"/>
        <dbReference type="ChEBI" id="CHEBI:78442"/>
        <dbReference type="ChEBI" id="CHEBI:78520"/>
        <dbReference type="ChEBI" id="CHEBI:456215"/>
        <dbReference type="EC" id="6.1.1.17"/>
    </reaction>
</comment>
<comment type="subunit">
    <text evidence="1">Monomer.</text>
</comment>
<comment type="subcellular location">
    <subcellularLocation>
        <location evidence="1">Cytoplasm</location>
    </subcellularLocation>
</comment>
<comment type="similarity">
    <text evidence="1">Belongs to the class-I aminoacyl-tRNA synthetase family. Glutamate--tRNA ligase type 1 subfamily.</text>
</comment>
<comment type="sequence caution" evidence="2">
    <conflict type="erroneous initiation">
        <sequence resource="EMBL-CDS" id="AAF10063"/>
    </conflict>
</comment>
<gene>
    <name evidence="1" type="primary">gltX</name>
    <name type="ordered locus">DR_0485</name>
</gene>
<sequence length="483" mass="54689">MSAPSSPRVTRIAPSPTGDPHVGTAYIGLFNHTLARQSGGRFILRVEDTDRNRYVPDSEKRIFQMMQWLNLTPDESPLQGGPNGPYRQSERFDLYGDYARQLVQSGHAYYAFETSDELAALREEAQKAGHVIAIPSRDLGAAQAQARVDAGEPAVIRLKVDRDGETVVNDLLRDPIHFANKEIDDKVLLKADGFPTYHLANVVDDRLMQVTHVVRAEEWITSTPIHVLLYRAFGWPEPVFAHMPLLRNADKSKISKRKNPTSVEWYQNQGFLPEAMLNFLATMGWTHPDGQEIFDLAEFERVFRLEDVTLGGPVFDLAKLRWYNGKYLREVLSEDDVARRLHAFLMQNKVTLPSVDGPQDPYFRAVTHLMIPRLEVFADFMDKTLYFWSEDYPVNEKAQKAIDAGKELLPELAARLKNLPTFDAASIKEMFHAYAEEKGLKMGKVMPPIRAAVAGTMESPDLPEMLEALGRERVLARVEKAAR</sequence>
<dbReference type="EC" id="6.1.1.17" evidence="1"/>
<dbReference type="EMBL" id="AE000513">
    <property type="protein sequence ID" value="AAF10063.1"/>
    <property type="status" value="ALT_INIT"/>
    <property type="molecule type" value="Genomic_DNA"/>
</dbReference>
<dbReference type="PIR" id="H75514">
    <property type="entry name" value="H75514"/>
</dbReference>
<dbReference type="RefSeq" id="NP_294208.1">
    <property type="nucleotide sequence ID" value="NC_001263.1"/>
</dbReference>
<dbReference type="RefSeq" id="WP_027479551.1">
    <property type="nucleotide sequence ID" value="NC_001263.1"/>
</dbReference>
<dbReference type="SMR" id="Q9RX30"/>
<dbReference type="FunCoup" id="Q9RX30">
    <property type="interactions" value="482"/>
</dbReference>
<dbReference type="STRING" id="243230.DR_0485"/>
<dbReference type="PaxDb" id="243230-DR_0485"/>
<dbReference type="EnsemblBacteria" id="AAF10063">
    <property type="protein sequence ID" value="AAF10063"/>
    <property type="gene ID" value="DR_0485"/>
</dbReference>
<dbReference type="GeneID" id="69516721"/>
<dbReference type="KEGG" id="dra:DR_0485"/>
<dbReference type="PATRIC" id="fig|243230.17.peg.664"/>
<dbReference type="eggNOG" id="COG0008">
    <property type="taxonomic scope" value="Bacteria"/>
</dbReference>
<dbReference type="HOGENOM" id="CLU_015768_6_3_0"/>
<dbReference type="InParanoid" id="Q9RX30"/>
<dbReference type="OrthoDB" id="9807503at2"/>
<dbReference type="Proteomes" id="UP000002524">
    <property type="component" value="Chromosome 1"/>
</dbReference>
<dbReference type="GO" id="GO:0005829">
    <property type="term" value="C:cytosol"/>
    <property type="evidence" value="ECO:0000318"/>
    <property type="project" value="GO_Central"/>
</dbReference>
<dbReference type="GO" id="GO:0005524">
    <property type="term" value="F:ATP binding"/>
    <property type="evidence" value="ECO:0007669"/>
    <property type="project" value="UniProtKB-UniRule"/>
</dbReference>
<dbReference type="GO" id="GO:0004818">
    <property type="term" value="F:glutamate-tRNA ligase activity"/>
    <property type="evidence" value="ECO:0000318"/>
    <property type="project" value="GO_Central"/>
</dbReference>
<dbReference type="GO" id="GO:0000049">
    <property type="term" value="F:tRNA binding"/>
    <property type="evidence" value="ECO:0007669"/>
    <property type="project" value="InterPro"/>
</dbReference>
<dbReference type="GO" id="GO:0008270">
    <property type="term" value="F:zinc ion binding"/>
    <property type="evidence" value="ECO:0007669"/>
    <property type="project" value="InterPro"/>
</dbReference>
<dbReference type="GO" id="GO:0006424">
    <property type="term" value="P:glutamyl-tRNA aminoacylation"/>
    <property type="evidence" value="ECO:0000318"/>
    <property type="project" value="GO_Central"/>
</dbReference>
<dbReference type="CDD" id="cd00808">
    <property type="entry name" value="GluRS_core"/>
    <property type="match status" value="1"/>
</dbReference>
<dbReference type="FunFam" id="3.40.50.620:FF:000045">
    <property type="entry name" value="Glutamate--tRNA ligase, mitochondrial"/>
    <property type="match status" value="1"/>
</dbReference>
<dbReference type="Gene3D" id="1.10.10.350">
    <property type="match status" value="1"/>
</dbReference>
<dbReference type="Gene3D" id="3.40.50.620">
    <property type="entry name" value="HUPs"/>
    <property type="match status" value="1"/>
</dbReference>
<dbReference type="HAMAP" id="MF_00022">
    <property type="entry name" value="Glu_tRNA_synth_type1"/>
    <property type="match status" value="1"/>
</dbReference>
<dbReference type="InterPro" id="IPR045462">
    <property type="entry name" value="aa-tRNA-synth_I_cd-bd"/>
</dbReference>
<dbReference type="InterPro" id="IPR020751">
    <property type="entry name" value="aa-tRNA-synth_I_codon-bd_sub2"/>
</dbReference>
<dbReference type="InterPro" id="IPR001412">
    <property type="entry name" value="aa-tRNA-synth_I_CS"/>
</dbReference>
<dbReference type="InterPro" id="IPR008925">
    <property type="entry name" value="aa_tRNA-synth_I_cd-bd_sf"/>
</dbReference>
<dbReference type="InterPro" id="IPR004527">
    <property type="entry name" value="Glu-tRNA-ligase_bac/mito"/>
</dbReference>
<dbReference type="InterPro" id="IPR000924">
    <property type="entry name" value="Glu/Gln-tRNA-synth"/>
</dbReference>
<dbReference type="InterPro" id="IPR020058">
    <property type="entry name" value="Glu/Gln-tRNA-synth_Ib_cat-dom"/>
</dbReference>
<dbReference type="InterPro" id="IPR049940">
    <property type="entry name" value="GluQ/Sye"/>
</dbReference>
<dbReference type="InterPro" id="IPR033910">
    <property type="entry name" value="GluRS_core"/>
</dbReference>
<dbReference type="InterPro" id="IPR014729">
    <property type="entry name" value="Rossmann-like_a/b/a_fold"/>
</dbReference>
<dbReference type="NCBIfam" id="TIGR00464">
    <property type="entry name" value="gltX_bact"/>
    <property type="match status" value="1"/>
</dbReference>
<dbReference type="PANTHER" id="PTHR43311">
    <property type="entry name" value="GLUTAMATE--TRNA LIGASE"/>
    <property type="match status" value="1"/>
</dbReference>
<dbReference type="PANTHER" id="PTHR43311:SF2">
    <property type="entry name" value="GLUTAMATE--TRNA LIGASE, MITOCHONDRIAL-RELATED"/>
    <property type="match status" value="1"/>
</dbReference>
<dbReference type="Pfam" id="PF19269">
    <property type="entry name" value="Anticodon_2"/>
    <property type="match status" value="1"/>
</dbReference>
<dbReference type="Pfam" id="PF00749">
    <property type="entry name" value="tRNA-synt_1c"/>
    <property type="match status" value="1"/>
</dbReference>
<dbReference type="PRINTS" id="PR00987">
    <property type="entry name" value="TRNASYNTHGLU"/>
</dbReference>
<dbReference type="SUPFAM" id="SSF48163">
    <property type="entry name" value="An anticodon-binding domain of class I aminoacyl-tRNA synthetases"/>
    <property type="match status" value="1"/>
</dbReference>
<dbReference type="SUPFAM" id="SSF52374">
    <property type="entry name" value="Nucleotidylyl transferase"/>
    <property type="match status" value="1"/>
</dbReference>
<dbReference type="PROSITE" id="PS00178">
    <property type="entry name" value="AA_TRNA_LIGASE_I"/>
    <property type="match status" value="1"/>
</dbReference>
<accession>Q9RX30</accession>
<name>SYE_DEIRA</name>
<reference key="1">
    <citation type="journal article" date="1999" name="Science">
        <title>Genome sequence of the radioresistant bacterium Deinococcus radiodurans R1.</title>
        <authorList>
            <person name="White O."/>
            <person name="Eisen J.A."/>
            <person name="Heidelberg J.F."/>
            <person name="Hickey E.K."/>
            <person name="Peterson J.D."/>
            <person name="Dodson R.J."/>
            <person name="Haft D.H."/>
            <person name="Gwinn M.L."/>
            <person name="Nelson W.C."/>
            <person name="Richardson D.L."/>
            <person name="Moffat K.S."/>
            <person name="Qin H."/>
            <person name="Jiang L."/>
            <person name="Pamphile W."/>
            <person name="Crosby M."/>
            <person name="Shen M."/>
            <person name="Vamathevan J.J."/>
            <person name="Lam P."/>
            <person name="McDonald L.A."/>
            <person name="Utterback T.R."/>
            <person name="Zalewski C."/>
            <person name="Makarova K.S."/>
            <person name="Aravind L."/>
            <person name="Daly M.J."/>
            <person name="Minton K.W."/>
            <person name="Fleischmann R.D."/>
            <person name="Ketchum K.A."/>
            <person name="Nelson K.E."/>
            <person name="Salzberg S.L."/>
            <person name="Smith H.O."/>
            <person name="Venter J.C."/>
            <person name="Fraser C.M."/>
        </authorList>
    </citation>
    <scope>NUCLEOTIDE SEQUENCE [LARGE SCALE GENOMIC DNA]</scope>
    <source>
        <strain>ATCC 13939 / DSM 20539 / JCM 16871 / CCUG 27074 / LMG 4051 / NBRC 15346 / NCIMB 9279 / VKM B-1422 / R1</strain>
    </source>
</reference>
<evidence type="ECO:0000255" key="1">
    <source>
        <dbReference type="HAMAP-Rule" id="MF_00022"/>
    </source>
</evidence>
<evidence type="ECO:0000305" key="2"/>